<protein>
    <recommendedName>
        <fullName>Coiled-coil domain-containing protein 85B</fullName>
    </recommendedName>
    <alternativeName>
        <fullName>Hepatitis delta antigen-interacting protein A homolog</fullName>
        <shortName>Delta-interacting protein A homolog</shortName>
    </alternativeName>
</protein>
<gene>
    <name type="primary">Ccdc85b</name>
    <name type="synonym">Dipa</name>
</gene>
<accession>Q6PDY0</accession>
<feature type="chain" id="PRO_0000079909" description="Coiled-coil domain-containing protein 85B">
    <location>
        <begin position="1"/>
        <end position="202"/>
    </location>
</feature>
<feature type="region of interest" description="Disordered" evidence="4">
    <location>
        <begin position="152"/>
        <end position="202"/>
    </location>
</feature>
<feature type="coiled-coil region" evidence="3">
    <location>
        <begin position="44"/>
        <end position="82"/>
    </location>
</feature>
<feature type="coiled-coil region" evidence="3">
    <location>
        <begin position="118"/>
        <end position="141"/>
    </location>
</feature>
<feature type="compositionally biased region" description="Gly residues" evidence="4">
    <location>
        <begin position="152"/>
        <end position="162"/>
    </location>
</feature>
<feature type="compositionally biased region" description="Low complexity" evidence="4">
    <location>
        <begin position="180"/>
        <end position="190"/>
    </location>
</feature>
<feature type="modified residue" description="N-acetylmethionine" evidence="2">
    <location>
        <position position="1"/>
    </location>
</feature>
<sequence length="202" mass="22133">MEAEAGGLEELTDEEMAALGKEELVRRLRREEAARLAALVQRGRLMQEVNRQLQGHLGEIRELKQLNRRLQAENRELRDLCCFLDSERQRGRRAARQWQLFGTQASRAVREDLGGCWQKLAELEGRQEELLRENLALKELCLALGEEWGPRGGPGGAVGSGAGPTPELALPPCGPRDLGDGSSSTGSVGSPDQLPLACSPDD</sequence>
<proteinExistence type="evidence at protein level"/>
<name>CC85B_MOUSE</name>
<dbReference type="EMBL" id="BC058411">
    <property type="protein sequence ID" value="AAH58411.1"/>
    <property type="molecule type" value="mRNA"/>
</dbReference>
<dbReference type="CCDS" id="CCDS50357.1"/>
<dbReference type="RefSeq" id="NP_941018.1">
    <property type="nucleotide sequence ID" value="NM_198616.4"/>
</dbReference>
<dbReference type="SMR" id="Q6PDY0"/>
<dbReference type="FunCoup" id="Q6PDY0">
    <property type="interactions" value="216"/>
</dbReference>
<dbReference type="STRING" id="10090.ENSMUSP00000137537"/>
<dbReference type="GlyGen" id="Q6PDY0">
    <property type="glycosylation" value="1 site"/>
</dbReference>
<dbReference type="PhosphoSitePlus" id="Q6PDY0"/>
<dbReference type="PaxDb" id="10090-ENSMUSP00000137537"/>
<dbReference type="ProteomicsDB" id="281248"/>
<dbReference type="Antibodypedia" id="55944">
    <property type="antibodies" value="54 antibodies from 20 providers"/>
</dbReference>
<dbReference type="Ensembl" id="ENSMUST00000179549.3">
    <property type="protein sequence ID" value="ENSMUSP00000137537.2"/>
    <property type="gene ID" value="ENSMUSG00000095098.3"/>
</dbReference>
<dbReference type="GeneID" id="240514"/>
<dbReference type="KEGG" id="mmu:240514"/>
<dbReference type="UCSC" id="uc012bgx.2">
    <property type="organism name" value="mouse"/>
</dbReference>
<dbReference type="AGR" id="MGI:2147607"/>
<dbReference type="CTD" id="11007"/>
<dbReference type="MGI" id="MGI:2147607">
    <property type="gene designation" value="Ccdc85b"/>
</dbReference>
<dbReference type="VEuPathDB" id="HostDB:ENSMUSG00000095098"/>
<dbReference type="eggNOG" id="KOG3819">
    <property type="taxonomic scope" value="Eukaryota"/>
</dbReference>
<dbReference type="GeneTree" id="ENSGT00940000162317"/>
<dbReference type="HOGENOM" id="CLU_117450_0_0_1"/>
<dbReference type="InParanoid" id="Q6PDY0"/>
<dbReference type="OMA" id="EEWGPRS"/>
<dbReference type="OrthoDB" id="10056395at2759"/>
<dbReference type="PhylomeDB" id="Q6PDY0"/>
<dbReference type="TreeFam" id="TF320243"/>
<dbReference type="BioGRID-ORCS" id="240514">
    <property type="hits" value="5 hits in 78 CRISPR screens"/>
</dbReference>
<dbReference type="ChiTaRS" id="Ccdc85b">
    <property type="organism name" value="mouse"/>
</dbReference>
<dbReference type="PRO" id="PR:Q6PDY0"/>
<dbReference type="Proteomes" id="UP000000589">
    <property type="component" value="Chromosome 19"/>
</dbReference>
<dbReference type="RNAct" id="Q6PDY0">
    <property type="molecule type" value="protein"/>
</dbReference>
<dbReference type="Bgee" id="ENSMUSG00000095098">
    <property type="expression patterns" value="Expressed in ventral horn of spinal cord and 208 other cell types or tissues"/>
</dbReference>
<dbReference type="ExpressionAtlas" id="Q6PDY0">
    <property type="expression patterns" value="baseline and differential"/>
</dbReference>
<dbReference type="GO" id="GO:0005912">
    <property type="term" value="C:adherens junction"/>
    <property type="evidence" value="ECO:0007669"/>
    <property type="project" value="UniProtKB-SubCell"/>
</dbReference>
<dbReference type="GO" id="GO:0005813">
    <property type="term" value="C:centrosome"/>
    <property type="evidence" value="ECO:0000250"/>
    <property type="project" value="UniProtKB"/>
</dbReference>
<dbReference type="GO" id="GO:0005737">
    <property type="term" value="C:cytoplasm"/>
    <property type="evidence" value="ECO:0007669"/>
    <property type="project" value="UniProtKB-KW"/>
</dbReference>
<dbReference type="GO" id="GO:0005634">
    <property type="term" value="C:nucleus"/>
    <property type="evidence" value="ECO:0000314"/>
    <property type="project" value="UniProtKB"/>
</dbReference>
<dbReference type="GO" id="GO:0070097">
    <property type="term" value="F:delta-catenin binding"/>
    <property type="evidence" value="ECO:0007669"/>
    <property type="project" value="Ensembl"/>
</dbReference>
<dbReference type="GO" id="GO:0030154">
    <property type="term" value="P:cell differentiation"/>
    <property type="evidence" value="ECO:0007669"/>
    <property type="project" value="UniProtKB-KW"/>
</dbReference>
<dbReference type="GO" id="GO:0030308">
    <property type="term" value="P:negative regulation of cell growth"/>
    <property type="evidence" value="ECO:0000250"/>
    <property type="project" value="UniProtKB"/>
</dbReference>
<dbReference type="GO" id="GO:0045892">
    <property type="term" value="P:negative regulation of DNA-templated transcription"/>
    <property type="evidence" value="ECO:0000314"/>
    <property type="project" value="UniProtKB"/>
</dbReference>
<dbReference type="GO" id="GO:0045599">
    <property type="term" value="P:negative regulation of fat cell differentiation"/>
    <property type="evidence" value="ECO:0000314"/>
    <property type="project" value="UniProtKB"/>
</dbReference>
<dbReference type="InterPro" id="IPR019359">
    <property type="entry name" value="CCDC85"/>
</dbReference>
<dbReference type="PANTHER" id="PTHR13546:SF12">
    <property type="entry name" value="COILED-COIL DOMAIN-CONTAINING PROTEIN 85B"/>
    <property type="match status" value="1"/>
</dbReference>
<dbReference type="PANTHER" id="PTHR13546">
    <property type="entry name" value="RE60986P"/>
    <property type="match status" value="1"/>
</dbReference>
<dbReference type="Pfam" id="PF10226">
    <property type="entry name" value="CCDC85"/>
    <property type="match status" value="1"/>
</dbReference>
<keyword id="KW-0007">Acetylation</keyword>
<keyword id="KW-0965">Cell junction</keyword>
<keyword id="KW-0175">Coiled coil</keyword>
<keyword id="KW-0963">Cytoplasm</keyword>
<keyword id="KW-0206">Cytoskeleton</keyword>
<keyword id="KW-0221">Differentiation</keyword>
<keyword id="KW-0341">Growth regulation</keyword>
<keyword id="KW-0539">Nucleus</keyword>
<keyword id="KW-1185">Reference proteome</keyword>
<keyword id="KW-0678">Repressor</keyword>
<keyword id="KW-0804">Transcription</keyword>
<keyword id="KW-0805">Transcription regulation</keyword>
<evidence type="ECO:0000250" key="1">
    <source>
        <dbReference type="UniProtKB" id="A2CEM9"/>
    </source>
</evidence>
<evidence type="ECO:0000250" key="2">
    <source>
        <dbReference type="UniProtKB" id="Q15834"/>
    </source>
</evidence>
<evidence type="ECO:0000255" key="3"/>
<evidence type="ECO:0000256" key="4">
    <source>
        <dbReference type="SAM" id="MobiDB-lite"/>
    </source>
</evidence>
<evidence type="ECO:0000269" key="5">
    <source>
    </source>
</evidence>
<evidence type="ECO:0000269" key="6">
    <source>
    </source>
</evidence>
<evidence type="ECO:0000269" key="7">
    <source>
    </source>
</evidence>
<evidence type="ECO:0000305" key="8"/>
<evidence type="ECO:0000305" key="9">
    <source>
    </source>
</evidence>
<organism>
    <name type="scientific">Mus musculus</name>
    <name type="common">Mouse</name>
    <dbReference type="NCBI Taxonomy" id="10090"/>
    <lineage>
        <taxon>Eukaryota</taxon>
        <taxon>Metazoa</taxon>
        <taxon>Chordata</taxon>
        <taxon>Craniata</taxon>
        <taxon>Vertebrata</taxon>
        <taxon>Euteleostomi</taxon>
        <taxon>Mammalia</taxon>
        <taxon>Eutheria</taxon>
        <taxon>Euarchontoglires</taxon>
        <taxon>Glires</taxon>
        <taxon>Rodentia</taxon>
        <taxon>Myomorpha</taxon>
        <taxon>Muroidea</taxon>
        <taxon>Muridae</taxon>
        <taxon>Murinae</taxon>
        <taxon>Mus</taxon>
        <taxon>Mus</taxon>
    </lineage>
</organism>
<comment type="function">
    <text evidence="1 5 6">Functions as a transcriptional repressor. May inhibit the activity of CTNNB1 in a TP53-dependent manner and thus regulate cell growth. May function in adipocyte differentiation, negatively regulating mitotic clonal expansion (PubMed:15644333, PubMed:22666460). Plays a role in cell-cell adhesion and epithelium development through its interaction with proteins of the beta-catenin family (By similarity).</text>
</comment>
<comment type="subunit">
    <text evidence="2 5 7 9">Interacts with CEBPB (PubMed:15644333). May interact with CEBPD (Probable). Interacts with EURL (PubMed:27404227). Interacts with MCRS1 (By similarity). Interacts with TCF7L2; competes with CTNNB1 (By similarity). Interacts with ANKRD26 (By similarity). Interacts with the beta-catenin family proteins ARVCF, CTNND1, CTNND2 and PKP4 (By similarity).</text>
</comment>
<comment type="subcellular location">
    <subcellularLocation>
        <location evidence="5 6">Nucleus</location>
    </subcellularLocation>
    <subcellularLocation>
        <location evidence="2">Cytoplasm</location>
        <location evidence="2">Cytoskeleton</location>
        <location evidence="2">Microtubule organizing center</location>
        <location evidence="2">Centrosome</location>
    </subcellularLocation>
    <subcellularLocation>
        <location evidence="2">Cell junction</location>
        <location evidence="2">Adherens junction</location>
    </subcellularLocation>
</comment>
<comment type="tissue specificity">
    <text evidence="5">Expressed in white and brown adipose tissue.</text>
</comment>
<comment type="similarity">
    <text evidence="8">Belongs to the CCDC85 family.</text>
</comment>
<reference key="1">
    <citation type="journal article" date="2004" name="Genome Res.">
        <title>The status, quality, and expansion of the NIH full-length cDNA project: the Mammalian Gene Collection (MGC).</title>
        <authorList>
            <consortium name="The MGC Project Team"/>
        </authorList>
    </citation>
    <scope>NUCLEOTIDE SEQUENCE [LARGE SCALE MRNA]</scope>
    <source>
        <strain>C57BL/6J</strain>
        <tissue>Brain</tissue>
    </source>
</reference>
<reference key="2">
    <citation type="journal article" date="2005" name="J. Biol. Chem.">
        <title>Delta-interacting protein A, a new inhibitory partner of CCAAT/enhancer-binding protein beta, implicated in adipocyte differentiation.</title>
        <authorList>
            <person name="Bezy O."/>
            <person name="Elabd C."/>
            <person name="Cochet O."/>
            <person name="Petersen R.K."/>
            <person name="Kristiansen K."/>
            <person name="Dani C."/>
            <person name="Ailhaud G."/>
            <person name="Amri E.-Z."/>
        </authorList>
    </citation>
    <scope>FUNCTION</scope>
    <scope>INTERACTION WITH CEBPB AND CEBPD</scope>
    <scope>SUBCELLULAR LOCATION</scope>
    <scope>TISSUE SPECIFICITY</scope>
</reference>
<reference key="3">
    <citation type="journal article" date="2012" name="PLoS ONE">
        <title>ANKRD26 and its interacting partners TRIO, GPS2, HMMR and DIPA regulate adipogenesis in 3T3-L1 cells.</title>
        <authorList>
            <person name="Liu X.F."/>
            <person name="Bera T.K."/>
            <person name="Kahue C."/>
            <person name="Escobar T."/>
            <person name="Fei Z."/>
            <person name="Raciti G.A."/>
            <person name="Pastan I."/>
        </authorList>
    </citation>
    <scope>FUNCTION</scope>
    <scope>SUBCELLULAR LOCATION</scope>
</reference>
<reference key="4">
    <citation type="journal article" date="2016" name="Sci. Rep.">
        <title>The HSA21 gene EURL/C21ORF91 controls neurogenesis within the cerebral cortex and is implicated in the pathogenesis of Down Syndrome.</title>
        <authorList>
            <person name="Li S.S."/>
            <person name="Qu Z."/>
            <person name="Haas M."/>
            <person name="Ngo L."/>
            <person name="Heo Y.J."/>
            <person name="Kang H.J."/>
            <person name="Britto J.M."/>
            <person name="Cullen H.D."/>
            <person name="Vanyai H.K."/>
            <person name="Tan S.S."/>
            <person name="Chan-Ling T."/>
            <person name="Gunnersen J.M."/>
            <person name="Heng J.I."/>
        </authorList>
    </citation>
    <scope>INTERACTION WITH EURL</scope>
</reference>